<sequence>MQTSKNQDELVKTFKSILKEERFGSQSEIVVALQGEGFSNINQSKVSRMLSKFGAVRTRNAKQQMVYCLPAELGVPTAGSPLKNLVLDVDHNQSMIVVRTSPGAAQLIARLLDSIGKPEGILGTIAGDDTIFISPSNIQQIEDTLETVKSLFNYTD</sequence>
<proteinExistence type="inferred from homology"/>
<reference key="1">
    <citation type="journal article" date="2008" name="PLoS ONE">
        <title>Environmental adaptation: genomic analysis of the piezotolerant and psychrotolerant deep-sea iron reducing bacterium Shewanella piezotolerans WP3.</title>
        <authorList>
            <person name="Wang F."/>
            <person name="Wang J."/>
            <person name="Jian H."/>
            <person name="Zhang B."/>
            <person name="Li S."/>
            <person name="Wang F."/>
            <person name="Zeng X."/>
            <person name="Gao L."/>
            <person name="Bartlett D.H."/>
            <person name="Yu J."/>
            <person name="Hu S."/>
            <person name="Xiao X."/>
        </authorList>
    </citation>
    <scope>NUCLEOTIDE SEQUENCE [LARGE SCALE GENOMIC DNA]</scope>
    <source>
        <strain>WP3 / JCM 13877</strain>
    </source>
</reference>
<accession>B8CSY8</accession>
<protein>
    <recommendedName>
        <fullName evidence="1">Arginine repressor</fullName>
    </recommendedName>
</protein>
<dbReference type="EMBL" id="CP000472">
    <property type="protein sequence ID" value="ACJ30764.1"/>
    <property type="molecule type" value="Genomic_DNA"/>
</dbReference>
<dbReference type="RefSeq" id="WP_020914104.1">
    <property type="nucleotide sequence ID" value="NC_011566.1"/>
</dbReference>
<dbReference type="SMR" id="B8CSY8"/>
<dbReference type="STRING" id="225849.swp_4101"/>
<dbReference type="KEGG" id="swp:swp_4101"/>
<dbReference type="eggNOG" id="COG1438">
    <property type="taxonomic scope" value="Bacteria"/>
</dbReference>
<dbReference type="HOGENOM" id="CLU_097103_2_0_6"/>
<dbReference type="OrthoDB" id="7060358at2"/>
<dbReference type="UniPathway" id="UPA00068"/>
<dbReference type="Proteomes" id="UP000000753">
    <property type="component" value="Chromosome"/>
</dbReference>
<dbReference type="GO" id="GO:0005737">
    <property type="term" value="C:cytoplasm"/>
    <property type="evidence" value="ECO:0007669"/>
    <property type="project" value="UniProtKB-SubCell"/>
</dbReference>
<dbReference type="GO" id="GO:0034618">
    <property type="term" value="F:arginine binding"/>
    <property type="evidence" value="ECO:0007669"/>
    <property type="project" value="InterPro"/>
</dbReference>
<dbReference type="GO" id="GO:0003677">
    <property type="term" value="F:DNA binding"/>
    <property type="evidence" value="ECO:0007669"/>
    <property type="project" value="UniProtKB-KW"/>
</dbReference>
<dbReference type="GO" id="GO:0003700">
    <property type="term" value="F:DNA-binding transcription factor activity"/>
    <property type="evidence" value="ECO:0007669"/>
    <property type="project" value="UniProtKB-UniRule"/>
</dbReference>
<dbReference type="GO" id="GO:0006526">
    <property type="term" value="P:L-arginine biosynthetic process"/>
    <property type="evidence" value="ECO:0007669"/>
    <property type="project" value="UniProtKB-UniPathway"/>
</dbReference>
<dbReference type="GO" id="GO:0051259">
    <property type="term" value="P:protein complex oligomerization"/>
    <property type="evidence" value="ECO:0007669"/>
    <property type="project" value="InterPro"/>
</dbReference>
<dbReference type="GO" id="GO:1900079">
    <property type="term" value="P:regulation of arginine biosynthetic process"/>
    <property type="evidence" value="ECO:0007669"/>
    <property type="project" value="UniProtKB-UniRule"/>
</dbReference>
<dbReference type="Gene3D" id="3.30.1360.40">
    <property type="match status" value="1"/>
</dbReference>
<dbReference type="Gene3D" id="1.10.10.10">
    <property type="entry name" value="Winged helix-like DNA-binding domain superfamily/Winged helix DNA-binding domain"/>
    <property type="match status" value="1"/>
</dbReference>
<dbReference type="HAMAP" id="MF_00173">
    <property type="entry name" value="Arg_repressor"/>
    <property type="match status" value="1"/>
</dbReference>
<dbReference type="InterPro" id="IPR001669">
    <property type="entry name" value="Arg_repress"/>
</dbReference>
<dbReference type="InterPro" id="IPR020899">
    <property type="entry name" value="Arg_repress_C"/>
</dbReference>
<dbReference type="InterPro" id="IPR036251">
    <property type="entry name" value="Arg_repress_C_sf"/>
</dbReference>
<dbReference type="InterPro" id="IPR020900">
    <property type="entry name" value="Arg_repress_DNA-bd"/>
</dbReference>
<dbReference type="InterPro" id="IPR036388">
    <property type="entry name" value="WH-like_DNA-bd_sf"/>
</dbReference>
<dbReference type="InterPro" id="IPR036390">
    <property type="entry name" value="WH_DNA-bd_sf"/>
</dbReference>
<dbReference type="NCBIfam" id="TIGR01529">
    <property type="entry name" value="argR_whole"/>
    <property type="match status" value="1"/>
</dbReference>
<dbReference type="NCBIfam" id="NF003457">
    <property type="entry name" value="PRK05066.1"/>
    <property type="match status" value="1"/>
</dbReference>
<dbReference type="PANTHER" id="PTHR34471">
    <property type="entry name" value="ARGININE REPRESSOR"/>
    <property type="match status" value="1"/>
</dbReference>
<dbReference type="PANTHER" id="PTHR34471:SF1">
    <property type="entry name" value="ARGININE REPRESSOR"/>
    <property type="match status" value="1"/>
</dbReference>
<dbReference type="Pfam" id="PF01316">
    <property type="entry name" value="Arg_repressor"/>
    <property type="match status" value="1"/>
</dbReference>
<dbReference type="Pfam" id="PF02863">
    <property type="entry name" value="Arg_repressor_C"/>
    <property type="match status" value="1"/>
</dbReference>
<dbReference type="PRINTS" id="PR01467">
    <property type="entry name" value="ARGREPRESSOR"/>
</dbReference>
<dbReference type="SUPFAM" id="SSF55252">
    <property type="entry name" value="C-terminal domain of arginine repressor"/>
    <property type="match status" value="1"/>
</dbReference>
<dbReference type="SUPFAM" id="SSF46785">
    <property type="entry name" value="Winged helix' DNA-binding domain"/>
    <property type="match status" value="1"/>
</dbReference>
<gene>
    <name evidence="1" type="primary">argR</name>
    <name type="ordered locus">swp_4101</name>
</gene>
<evidence type="ECO:0000255" key="1">
    <source>
        <dbReference type="HAMAP-Rule" id="MF_00173"/>
    </source>
</evidence>
<comment type="function">
    <text evidence="1">Regulates arginine biosynthesis genes.</text>
</comment>
<comment type="pathway">
    <text>Amino-acid biosynthesis; L-arginine biosynthesis [regulation].</text>
</comment>
<comment type="subcellular location">
    <subcellularLocation>
        <location evidence="1">Cytoplasm</location>
    </subcellularLocation>
</comment>
<comment type="similarity">
    <text evidence="1">Belongs to the ArgR family.</text>
</comment>
<feature type="chain" id="PRO_1000189562" description="Arginine repressor">
    <location>
        <begin position="1"/>
        <end position="156"/>
    </location>
</feature>
<keyword id="KW-0028">Amino-acid biosynthesis</keyword>
<keyword id="KW-0055">Arginine biosynthesis</keyword>
<keyword id="KW-0963">Cytoplasm</keyword>
<keyword id="KW-0238">DNA-binding</keyword>
<keyword id="KW-0678">Repressor</keyword>
<keyword id="KW-0804">Transcription</keyword>
<keyword id="KW-0805">Transcription regulation</keyword>
<name>ARGR_SHEPW</name>
<organism>
    <name type="scientific">Shewanella piezotolerans (strain WP3 / JCM 13877)</name>
    <dbReference type="NCBI Taxonomy" id="225849"/>
    <lineage>
        <taxon>Bacteria</taxon>
        <taxon>Pseudomonadati</taxon>
        <taxon>Pseudomonadota</taxon>
        <taxon>Gammaproteobacteria</taxon>
        <taxon>Alteromonadales</taxon>
        <taxon>Shewanellaceae</taxon>
        <taxon>Shewanella</taxon>
    </lineage>
</organism>